<keyword id="KW-0150">Chloroplast</keyword>
<keyword id="KW-0249">Electron transport</keyword>
<keyword id="KW-0349">Heme</keyword>
<keyword id="KW-0408">Iron</keyword>
<keyword id="KW-0472">Membrane</keyword>
<keyword id="KW-0479">Metal-binding</keyword>
<keyword id="KW-0602">Photosynthesis</keyword>
<keyword id="KW-0934">Plastid</keyword>
<keyword id="KW-0732">Signal</keyword>
<keyword id="KW-0793">Thylakoid</keyword>
<keyword id="KW-0812">Transmembrane</keyword>
<keyword id="KW-1133">Transmembrane helix</keyword>
<keyword id="KW-0813">Transport</keyword>
<geneLocation type="chloroplast"/>
<evidence type="ECO:0000250" key="1"/>
<evidence type="ECO:0000255" key="2">
    <source>
        <dbReference type="HAMAP-Rule" id="MF_00610"/>
    </source>
</evidence>
<protein>
    <recommendedName>
        <fullName evidence="2">Cytochrome f</fullName>
    </recommendedName>
</protein>
<proteinExistence type="inferred from homology"/>
<accession>Q1KVS1</accession>
<sequence length="320" mass="35039">MNFFTHKKNNFGSFVTIFSFLVALGVTNLTPAAEAYPIFAQQNYENPREANGRIVCANCHLAQKPVELEVPQAVLPDTVFEAVVKIPYDQQVQQVLGNGKKGDLNVGMVLILPDGFELAPADRVPEEMKKKVGKLFYQPYSPDKKNILVVGPVPGKKYSEMVIPILSPDPATNKNVSFLKYPIYFGGNRGRGQVYPDGSKSNNTVYNSSVTGKISNIAPFDKKGGVEITIETANGDSIVEKIPAGPQVIVTQGQTVQPDQPLTNNPNVGGFGQKDVEIVLQNPARIQGLLVFFATVLFAQVLLVLKKKQFEKVQLAEMNF</sequence>
<feature type="signal peptide" evidence="2">
    <location>
        <begin position="1"/>
        <end position="35"/>
    </location>
</feature>
<feature type="chain" id="PRO_0000275447" description="Cytochrome f">
    <location>
        <begin position="36"/>
        <end position="320"/>
    </location>
</feature>
<feature type="transmembrane region" description="Helical" evidence="2">
    <location>
        <begin position="286"/>
        <end position="306"/>
    </location>
</feature>
<feature type="binding site" description="axial binding residue" evidence="2">
    <location>
        <position position="36"/>
    </location>
    <ligand>
        <name>heme</name>
        <dbReference type="ChEBI" id="CHEBI:30413"/>
    </ligand>
    <ligandPart>
        <name>Fe</name>
        <dbReference type="ChEBI" id="CHEBI:18248"/>
    </ligandPart>
</feature>
<feature type="binding site" description="covalent" evidence="2">
    <location>
        <position position="56"/>
    </location>
    <ligand>
        <name>heme</name>
        <dbReference type="ChEBI" id="CHEBI:30413"/>
    </ligand>
</feature>
<feature type="binding site" description="covalent" evidence="2">
    <location>
        <position position="59"/>
    </location>
    <ligand>
        <name>heme</name>
        <dbReference type="ChEBI" id="CHEBI:30413"/>
    </ligand>
</feature>
<feature type="binding site" description="axial binding residue" evidence="2">
    <location>
        <position position="60"/>
    </location>
    <ligand>
        <name>heme</name>
        <dbReference type="ChEBI" id="CHEBI:30413"/>
    </ligand>
    <ligandPart>
        <name>Fe</name>
        <dbReference type="ChEBI" id="CHEBI:18248"/>
    </ligandPart>
</feature>
<reference key="1">
    <citation type="journal article" date="2006" name="BMC Evol. Biol.">
        <title>The complete chloroplast genome sequence of the chlorophycean green alga Scenedesmus obliquus reveals a compact gene organization and a biased distribution of genes on the two DNA strands.</title>
        <authorList>
            <person name="de Cambiaire J.-C."/>
            <person name="Otis C."/>
            <person name="Lemieux C."/>
            <person name="Turmel M."/>
        </authorList>
    </citation>
    <scope>NUCLEOTIDE SEQUENCE [LARGE SCALE GENOMIC DNA]</scope>
    <source>
        <strain>UTEX 393</strain>
    </source>
</reference>
<comment type="function">
    <text evidence="2">Component of the cytochrome b6-f complex, which mediates electron transfer between photosystem II (PSII) and photosystem I (PSI), cyclic electron flow around PSI, and state transitions.</text>
</comment>
<comment type="cofactor">
    <cofactor evidence="2">
        <name>heme</name>
        <dbReference type="ChEBI" id="CHEBI:30413"/>
    </cofactor>
    <text evidence="2">Binds 1 heme group covalently.</text>
</comment>
<comment type="subunit">
    <text evidence="1">The 4 large subunits of the cytochrome b6-f complex are cytochrome b6, subunit IV (17 kDa polypeptide, petD), cytochrome f and the Rieske protein, while the 4 small subunits are PetG, PetL, PetM and PetN. The complex functions as a dimer (By similarity).</text>
</comment>
<comment type="subcellular location">
    <subcellularLocation>
        <location evidence="2">Plastid</location>
        <location evidence="2">Chloroplast thylakoid membrane</location>
        <topology evidence="2">Single-pass membrane protein</topology>
    </subcellularLocation>
</comment>
<comment type="similarity">
    <text evidence="2">Belongs to the cytochrome f family.</text>
</comment>
<organism>
    <name type="scientific">Tetradesmus obliquus</name>
    <name type="common">Green alga</name>
    <name type="synonym">Acutodesmus obliquus</name>
    <dbReference type="NCBI Taxonomy" id="3088"/>
    <lineage>
        <taxon>Eukaryota</taxon>
        <taxon>Viridiplantae</taxon>
        <taxon>Chlorophyta</taxon>
        <taxon>core chlorophytes</taxon>
        <taxon>Chlorophyceae</taxon>
        <taxon>CS clade</taxon>
        <taxon>Sphaeropleales</taxon>
        <taxon>Scenedesmaceae</taxon>
        <taxon>Tetradesmus</taxon>
    </lineage>
</organism>
<name>CYF_TETOB</name>
<dbReference type="EMBL" id="DQ396875">
    <property type="protein sequence ID" value="ABD48286.1"/>
    <property type="molecule type" value="Genomic_DNA"/>
</dbReference>
<dbReference type="RefSeq" id="YP_636003.1">
    <property type="nucleotide sequence ID" value="NC_008101.1"/>
</dbReference>
<dbReference type="SMR" id="Q1KVS1"/>
<dbReference type="GeneID" id="4099777"/>
<dbReference type="GO" id="GO:0009535">
    <property type="term" value="C:chloroplast thylakoid membrane"/>
    <property type="evidence" value="ECO:0007669"/>
    <property type="project" value="UniProtKB-SubCell"/>
</dbReference>
<dbReference type="GO" id="GO:0009055">
    <property type="term" value="F:electron transfer activity"/>
    <property type="evidence" value="ECO:0007669"/>
    <property type="project" value="UniProtKB-UniRule"/>
</dbReference>
<dbReference type="GO" id="GO:0020037">
    <property type="term" value="F:heme binding"/>
    <property type="evidence" value="ECO:0007669"/>
    <property type="project" value="InterPro"/>
</dbReference>
<dbReference type="GO" id="GO:0005506">
    <property type="term" value="F:iron ion binding"/>
    <property type="evidence" value="ECO:0007669"/>
    <property type="project" value="InterPro"/>
</dbReference>
<dbReference type="GO" id="GO:0015979">
    <property type="term" value="P:photosynthesis"/>
    <property type="evidence" value="ECO:0007669"/>
    <property type="project" value="UniProtKB-UniRule"/>
</dbReference>
<dbReference type="FunFam" id="1.20.5.700:FF:000001">
    <property type="entry name" value="Cytochrome f"/>
    <property type="match status" value="1"/>
</dbReference>
<dbReference type="FunFam" id="2.60.40.830:FF:000001">
    <property type="entry name" value="Cytochrome f"/>
    <property type="match status" value="1"/>
</dbReference>
<dbReference type="Gene3D" id="2.40.50.100">
    <property type="match status" value="1"/>
</dbReference>
<dbReference type="Gene3D" id="2.60.40.830">
    <property type="entry name" value="Cytochrome f large domain"/>
    <property type="match status" value="1"/>
</dbReference>
<dbReference type="Gene3D" id="1.20.5.700">
    <property type="entry name" value="Single helix bin"/>
    <property type="match status" value="1"/>
</dbReference>
<dbReference type="HAMAP" id="MF_00610">
    <property type="entry name" value="Cytb6_f_cytF"/>
    <property type="match status" value="1"/>
</dbReference>
<dbReference type="InterPro" id="IPR024058">
    <property type="entry name" value="Cyt-f_TM"/>
</dbReference>
<dbReference type="InterPro" id="IPR002325">
    <property type="entry name" value="Cyt_f"/>
</dbReference>
<dbReference type="InterPro" id="IPR024094">
    <property type="entry name" value="Cyt_f_lg_dom"/>
</dbReference>
<dbReference type="InterPro" id="IPR036826">
    <property type="entry name" value="Cyt_f_lg_dom_sf"/>
</dbReference>
<dbReference type="InterPro" id="IPR011054">
    <property type="entry name" value="Rudment_hybrid_motif"/>
</dbReference>
<dbReference type="PANTHER" id="PTHR33288">
    <property type="match status" value="1"/>
</dbReference>
<dbReference type="PANTHER" id="PTHR33288:SF10">
    <property type="entry name" value="CYTOCHROME F"/>
    <property type="match status" value="1"/>
</dbReference>
<dbReference type="Pfam" id="PF01333">
    <property type="entry name" value="Apocytochr_F_C"/>
    <property type="match status" value="1"/>
</dbReference>
<dbReference type="Pfam" id="PF16639">
    <property type="entry name" value="Apocytochr_F_N"/>
    <property type="match status" value="1"/>
</dbReference>
<dbReference type="PRINTS" id="PR00610">
    <property type="entry name" value="CYTOCHROMEF"/>
</dbReference>
<dbReference type="SUPFAM" id="SSF103431">
    <property type="entry name" value="Cytochrome f subunit of the cytochrome b6f complex, transmembrane anchor"/>
    <property type="match status" value="1"/>
</dbReference>
<dbReference type="SUPFAM" id="SSF49441">
    <property type="entry name" value="Cytochrome f, large domain"/>
    <property type="match status" value="1"/>
</dbReference>
<dbReference type="SUPFAM" id="SSF51246">
    <property type="entry name" value="Rudiment single hybrid motif"/>
    <property type="match status" value="1"/>
</dbReference>
<dbReference type="PROSITE" id="PS51010">
    <property type="entry name" value="CYTF"/>
    <property type="match status" value="1"/>
</dbReference>
<gene>
    <name evidence="2" type="primary">petA</name>
</gene>